<keyword id="KW-1185">Reference proteome</keyword>
<organism>
    <name type="scientific">Methanocaldococcus jannaschii (strain ATCC 43067 / DSM 2661 / JAL-1 / JCM 10045 / NBRC 100440)</name>
    <name type="common">Methanococcus jannaschii</name>
    <dbReference type="NCBI Taxonomy" id="243232"/>
    <lineage>
        <taxon>Archaea</taxon>
        <taxon>Methanobacteriati</taxon>
        <taxon>Methanobacteriota</taxon>
        <taxon>Methanomada group</taxon>
        <taxon>Methanococci</taxon>
        <taxon>Methanococcales</taxon>
        <taxon>Methanocaldococcaceae</taxon>
        <taxon>Methanocaldococcus</taxon>
    </lineage>
</organism>
<sequence>MMKYRQKDDKMNFENENALFKKALEEKEKGNYDDAIYYLDWASLIAFAKGNLQKIKEIEKILSELVEKTDYLSLYASFFIKITNSILKKEKLPNNIIDEFFEAIEGIEEKDKEFKFVVMALKRIVNYMEPMNQKVPEWIYEWIEDKEEMIKEVEKFNPEKDKVLIQSKDFKKGFVTGTFIGGELDKSKMKIVERAKMMFGIIEVDGAVIEIPLMAMNFTGGIFRAKGVKNEEHLNKIIKTIEDLMIDSYFY</sequence>
<proteinExistence type="predicted"/>
<dbReference type="EMBL" id="L77117">
    <property type="protein sequence ID" value="AAB98285.1"/>
    <property type="molecule type" value="Genomic_DNA"/>
</dbReference>
<dbReference type="PIR" id="B64337">
    <property type="entry name" value="B64337"/>
</dbReference>
<dbReference type="PaxDb" id="243232-MJ_0297"/>
<dbReference type="EnsemblBacteria" id="AAB98285">
    <property type="protein sequence ID" value="AAB98285"/>
    <property type="gene ID" value="MJ_0297"/>
</dbReference>
<dbReference type="KEGG" id="mja:MJ_0297"/>
<dbReference type="eggNOG" id="arCOG09664">
    <property type="taxonomic scope" value="Archaea"/>
</dbReference>
<dbReference type="HOGENOM" id="CLU_1105213_0_0_2"/>
<dbReference type="InParanoid" id="Q57745"/>
<dbReference type="OrthoDB" id="65781at2157"/>
<dbReference type="Proteomes" id="UP000000805">
    <property type="component" value="Chromosome"/>
</dbReference>
<reference key="1">
    <citation type="journal article" date="1996" name="Science">
        <title>Complete genome sequence of the methanogenic archaeon, Methanococcus jannaschii.</title>
        <authorList>
            <person name="Bult C.J."/>
            <person name="White O."/>
            <person name="Olsen G.J."/>
            <person name="Zhou L."/>
            <person name="Fleischmann R.D."/>
            <person name="Sutton G.G."/>
            <person name="Blake J.A."/>
            <person name="FitzGerald L.M."/>
            <person name="Clayton R.A."/>
            <person name="Gocayne J.D."/>
            <person name="Kerlavage A.R."/>
            <person name="Dougherty B.A."/>
            <person name="Tomb J.-F."/>
            <person name="Adams M.D."/>
            <person name="Reich C.I."/>
            <person name="Overbeek R."/>
            <person name="Kirkness E.F."/>
            <person name="Weinstock K.G."/>
            <person name="Merrick J.M."/>
            <person name="Glodek A."/>
            <person name="Scott J.L."/>
            <person name="Geoghagen N.S.M."/>
            <person name="Weidman J.F."/>
            <person name="Fuhrmann J.L."/>
            <person name="Nguyen D."/>
            <person name="Utterback T.R."/>
            <person name="Kelley J.M."/>
            <person name="Peterson J.D."/>
            <person name="Sadow P.W."/>
            <person name="Hanna M.C."/>
            <person name="Cotton M.D."/>
            <person name="Roberts K.M."/>
            <person name="Hurst M.A."/>
            <person name="Kaine B.P."/>
            <person name="Borodovsky M."/>
            <person name="Klenk H.-P."/>
            <person name="Fraser C.M."/>
            <person name="Smith H.O."/>
            <person name="Woese C.R."/>
            <person name="Venter J.C."/>
        </authorList>
    </citation>
    <scope>NUCLEOTIDE SEQUENCE [LARGE SCALE GENOMIC DNA]</scope>
    <source>
        <strain>ATCC 43067 / DSM 2661 / JAL-1 / JCM 10045 / NBRC 100440</strain>
    </source>
</reference>
<protein>
    <recommendedName>
        <fullName>Uncharacterized protein MJ0297</fullName>
    </recommendedName>
</protein>
<gene>
    <name type="ordered locus">MJ0297</name>
</gene>
<accession>Q57745</accession>
<feature type="chain" id="PRO_0000106780" description="Uncharacterized protein MJ0297">
    <location>
        <begin position="1"/>
        <end position="251"/>
    </location>
</feature>
<name>Y297_METJA</name>